<reference key="1">
    <citation type="journal article" date="2009" name="BMC Evol. Biol.">
        <title>A proteomic approach for studying insect phylogeny: CAPA peptides of ancient insect taxa (Dictyoptera, Blattoptera) as a test case.</title>
        <authorList>
            <person name="Roth S."/>
            <person name="Fromm B."/>
            <person name="Gaede G."/>
            <person name="Predel R."/>
        </authorList>
    </citation>
    <scope>PROTEIN SEQUENCE</scope>
    <scope>AMIDATION AT LEU-17</scope>
    <source>
        <tissue>Abdominal perisympathetic organs</tissue>
    </source>
</reference>
<reference evidence="5" key="2">
    <citation type="submission" date="2005-09" db="UniProtKB">
        <authorList>
            <person name="Predel R."/>
        </authorList>
    </citation>
    <scope>PROTEIN SEQUENCE</scope>
    <scope>TISSUE SPECIFICITY</scope>
    <scope>MASS SPECTROMETRY</scope>
    <scope>AMIDATION AT LEU-17</scope>
    <source>
        <tissue>Abdominal perisympathetic organs</tissue>
    </source>
</reference>
<accession>P84665</accession>
<feature type="peptide" id="PRO_0000044345" description="Pyrokinin-5">
    <location>
        <begin position="1"/>
        <end position="17"/>
    </location>
</feature>
<feature type="modified residue" description="Leucine amide" evidence="3 4">
    <location>
        <position position="17"/>
    </location>
</feature>
<dbReference type="GO" id="GO:0005576">
    <property type="term" value="C:extracellular region"/>
    <property type="evidence" value="ECO:0007669"/>
    <property type="project" value="UniProtKB-SubCell"/>
</dbReference>
<dbReference type="GO" id="GO:0005184">
    <property type="term" value="F:neuropeptide hormone activity"/>
    <property type="evidence" value="ECO:0007669"/>
    <property type="project" value="InterPro"/>
</dbReference>
<dbReference type="GO" id="GO:0007218">
    <property type="term" value="P:neuropeptide signaling pathway"/>
    <property type="evidence" value="ECO:0007669"/>
    <property type="project" value="UniProtKB-KW"/>
</dbReference>
<dbReference type="InterPro" id="IPR001484">
    <property type="entry name" value="Pyrokinin_CS"/>
</dbReference>
<dbReference type="PROSITE" id="PS00539">
    <property type="entry name" value="PYROKININ"/>
    <property type="match status" value="1"/>
</dbReference>
<sequence>SGETSGEGNGMWFGPRL</sequence>
<evidence type="ECO:0000250" key="1">
    <source>
        <dbReference type="UniProtKB" id="P84594"/>
    </source>
</evidence>
<evidence type="ECO:0000255" key="2"/>
<evidence type="ECO:0000269" key="3">
    <source>
    </source>
</evidence>
<evidence type="ECO:0000269" key="4">
    <source ref="2"/>
</evidence>
<evidence type="ECO:0000305" key="5"/>
<name>PPK5_DIPPU</name>
<organism>
    <name type="scientific">Diploptera punctata</name>
    <name type="common">Pacific beetle cockroach</name>
    <dbReference type="NCBI Taxonomy" id="6984"/>
    <lineage>
        <taxon>Eukaryota</taxon>
        <taxon>Metazoa</taxon>
        <taxon>Ecdysozoa</taxon>
        <taxon>Arthropoda</taxon>
        <taxon>Hexapoda</taxon>
        <taxon>Insecta</taxon>
        <taxon>Pterygota</taxon>
        <taxon>Neoptera</taxon>
        <taxon>Polyneoptera</taxon>
        <taxon>Dictyoptera</taxon>
        <taxon>Blattodea</taxon>
        <taxon>Blaberoidea</taxon>
        <taxon>Blaberidae</taxon>
        <taxon>Diplopterinae</taxon>
        <taxon>Diploptera</taxon>
    </lineage>
</organism>
<comment type="function">
    <text evidence="1">Myoactive.</text>
</comment>
<comment type="subcellular location">
    <subcellularLocation>
        <location evidence="5">Secreted</location>
    </subcellularLocation>
</comment>
<comment type="tissue specificity">
    <text evidence="4">Expressed in abdominal perisympathetic organs and abdominal ganglia.</text>
</comment>
<comment type="mass spectrometry">
    <text>With amidation.</text>
</comment>
<comment type="similarity">
    <text evidence="2">Belongs to the pyrokinin family.</text>
</comment>
<protein>
    <recommendedName>
        <fullName>Pyrokinin-5</fullName>
        <shortName>Dippu-PK-5</shortName>
    </recommendedName>
    <alternativeName>
        <fullName>DipPu-Capa-PK</fullName>
    </alternativeName>
    <alternativeName>
        <fullName>FXPRL-amide</fullName>
    </alternativeName>
</protein>
<proteinExistence type="evidence at protein level"/>
<keyword id="KW-0027">Amidation</keyword>
<keyword id="KW-0903">Direct protein sequencing</keyword>
<keyword id="KW-0527">Neuropeptide</keyword>
<keyword id="KW-0964">Secreted</keyword>